<comment type="function">
    <text>Occurs in almost all aerobically respiring organisms and serves to protect cells from the toxic effects of hydrogen peroxide.</text>
</comment>
<comment type="catalytic activity">
    <reaction evidence="2">
        <text>2 H2O2 = O2 + 2 H2O</text>
        <dbReference type="Rhea" id="RHEA:20309"/>
        <dbReference type="ChEBI" id="CHEBI:15377"/>
        <dbReference type="ChEBI" id="CHEBI:15379"/>
        <dbReference type="ChEBI" id="CHEBI:16240"/>
        <dbReference type="EC" id="1.11.1.6"/>
    </reaction>
</comment>
<comment type="cofactor">
    <cofactor>
        <name>heme</name>
        <dbReference type="ChEBI" id="CHEBI:30413"/>
    </cofactor>
</comment>
<comment type="subunit">
    <text evidence="1">Homotetramer.</text>
</comment>
<comment type="subcellular location">
    <subcellularLocation>
        <location evidence="1">Peroxisome</location>
    </subcellularLocation>
</comment>
<comment type="similarity">
    <text evidence="3">Belongs to the catalase family.</text>
</comment>
<protein>
    <recommendedName>
        <fullName>Catalase isozyme 2</fullName>
        <ecNumber>1.11.1.6</ecNumber>
    </recommendedName>
</protein>
<name>CATA2_SOLLC</name>
<reference key="1">
    <citation type="submission" date="1998-12" db="EMBL/GenBank/DDBJ databases">
        <title>Cloning of a cDNA encoding catalase from tomato.</title>
        <authorList>
            <person name="Kerdnaimongkol K."/>
            <person name="Woodson W.R."/>
        </authorList>
    </citation>
    <scope>NUCLEOTIDE SEQUENCE [MRNA]</scope>
</reference>
<dbReference type="EC" id="1.11.1.6"/>
<dbReference type="EMBL" id="AF112368">
    <property type="protein sequence ID" value="AAD41256.1"/>
    <property type="molecule type" value="mRNA"/>
</dbReference>
<dbReference type="SMR" id="Q9XHH3"/>
<dbReference type="FunCoup" id="Q9XHH3">
    <property type="interactions" value="1584"/>
</dbReference>
<dbReference type="STRING" id="4081.Q9XHH3"/>
<dbReference type="PaxDb" id="4081-Solyc02g082760.2.1"/>
<dbReference type="eggNOG" id="KOG0047">
    <property type="taxonomic scope" value="Eukaryota"/>
</dbReference>
<dbReference type="InParanoid" id="Q9XHH3"/>
<dbReference type="BRENDA" id="1.11.1.6">
    <property type="organism ID" value="3101"/>
</dbReference>
<dbReference type="Proteomes" id="UP000004994">
    <property type="component" value="Unplaced"/>
</dbReference>
<dbReference type="ExpressionAtlas" id="Q9XHH3">
    <property type="expression patterns" value="baseline and differential"/>
</dbReference>
<dbReference type="GO" id="GO:0005737">
    <property type="term" value="C:cytoplasm"/>
    <property type="evidence" value="ECO:0000318"/>
    <property type="project" value="GO_Central"/>
</dbReference>
<dbReference type="GO" id="GO:0005777">
    <property type="term" value="C:peroxisome"/>
    <property type="evidence" value="ECO:0007669"/>
    <property type="project" value="UniProtKB-SubCell"/>
</dbReference>
<dbReference type="GO" id="GO:0004096">
    <property type="term" value="F:catalase activity"/>
    <property type="evidence" value="ECO:0000318"/>
    <property type="project" value="GO_Central"/>
</dbReference>
<dbReference type="GO" id="GO:0020037">
    <property type="term" value="F:heme binding"/>
    <property type="evidence" value="ECO:0000318"/>
    <property type="project" value="GO_Central"/>
</dbReference>
<dbReference type="GO" id="GO:0046872">
    <property type="term" value="F:metal ion binding"/>
    <property type="evidence" value="ECO:0007669"/>
    <property type="project" value="UniProtKB-KW"/>
</dbReference>
<dbReference type="GO" id="GO:0042744">
    <property type="term" value="P:hydrogen peroxide catabolic process"/>
    <property type="evidence" value="ECO:0000318"/>
    <property type="project" value="GO_Central"/>
</dbReference>
<dbReference type="GO" id="GO:0042542">
    <property type="term" value="P:response to hydrogen peroxide"/>
    <property type="evidence" value="ECO:0000318"/>
    <property type="project" value="GO_Central"/>
</dbReference>
<dbReference type="CDD" id="cd08154">
    <property type="entry name" value="catalase_clade_1"/>
    <property type="match status" value="1"/>
</dbReference>
<dbReference type="FunFam" id="2.40.180.10:FF:000002">
    <property type="entry name" value="Catalase"/>
    <property type="match status" value="1"/>
</dbReference>
<dbReference type="Gene3D" id="2.40.180.10">
    <property type="entry name" value="Catalase core domain"/>
    <property type="match status" value="1"/>
</dbReference>
<dbReference type="InterPro" id="IPR018028">
    <property type="entry name" value="Catalase"/>
</dbReference>
<dbReference type="InterPro" id="IPR024708">
    <property type="entry name" value="Catalase_AS"/>
</dbReference>
<dbReference type="InterPro" id="IPR024711">
    <property type="entry name" value="Catalase_clade1/3"/>
</dbReference>
<dbReference type="InterPro" id="IPR011614">
    <property type="entry name" value="Catalase_core"/>
</dbReference>
<dbReference type="InterPro" id="IPR002226">
    <property type="entry name" value="Catalase_haem_BS"/>
</dbReference>
<dbReference type="InterPro" id="IPR010582">
    <property type="entry name" value="Catalase_immune_responsive"/>
</dbReference>
<dbReference type="InterPro" id="IPR020835">
    <property type="entry name" value="Catalase_sf"/>
</dbReference>
<dbReference type="PANTHER" id="PTHR11465">
    <property type="entry name" value="CATALASE"/>
    <property type="match status" value="1"/>
</dbReference>
<dbReference type="PANTHER" id="PTHR11465:SF41">
    <property type="entry name" value="CATALASE ISOZYME 2"/>
    <property type="match status" value="1"/>
</dbReference>
<dbReference type="Pfam" id="PF00199">
    <property type="entry name" value="Catalase"/>
    <property type="match status" value="1"/>
</dbReference>
<dbReference type="Pfam" id="PF06628">
    <property type="entry name" value="Catalase-rel"/>
    <property type="match status" value="1"/>
</dbReference>
<dbReference type="PIRSF" id="PIRSF038928">
    <property type="entry name" value="Catalase_clade1-3"/>
    <property type="match status" value="1"/>
</dbReference>
<dbReference type="PRINTS" id="PR00067">
    <property type="entry name" value="CATALASE"/>
</dbReference>
<dbReference type="SMART" id="SM01060">
    <property type="entry name" value="Catalase"/>
    <property type="match status" value="1"/>
</dbReference>
<dbReference type="SUPFAM" id="SSF56634">
    <property type="entry name" value="Heme-dependent catalase-like"/>
    <property type="match status" value="1"/>
</dbReference>
<dbReference type="PROSITE" id="PS00437">
    <property type="entry name" value="CATALASE_1"/>
    <property type="match status" value="1"/>
</dbReference>
<dbReference type="PROSITE" id="PS00438">
    <property type="entry name" value="CATALASE_2"/>
    <property type="match status" value="1"/>
</dbReference>
<dbReference type="PROSITE" id="PS51402">
    <property type="entry name" value="CATALASE_3"/>
    <property type="match status" value="1"/>
</dbReference>
<evidence type="ECO:0000250" key="1"/>
<evidence type="ECO:0000255" key="2">
    <source>
        <dbReference type="PROSITE-ProRule" id="PRU10013"/>
    </source>
</evidence>
<evidence type="ECO:0000305" key="3"/>
<accession>Q9XHH3</accession>
<gene>
    <name type="primary">CAT2</name>
</gene>
<feature type="chain" id="PRO_0000084945" description="Catalase isozyme 2">
    <location>
        <begin position="1"/>
        <end position="492"/>
    </location>
</feature>
<feature type="active site" evidence="2">
    <location>
        <position position="65"/>
    </location>
</feature>
<feature type="active site" evidence="2">
    <location>
        <position position="138"/>
    </location>
</feature>
<feature type="binding site" description="axial binding residue" evidence="1">
    <location>
        <position position="348"/>
    </location>
    <ligand>
        <name>heme</name>
        <dbReference type="ChEBI" id="CHEBI:30413"/>
    </ligand>
    <ligandPart>
        <name>Fe</name>
        <dbReference type="ChEBI" id="CHEBI:18248"/>
    </ligandPart>
</feature>
<organism>
    <name type="scientific">Solanum lycopersicum</name>
    <name type="common">Tomato</name>
    <name type="synonym">Lycopersicon esculentum</name>
    <dbReference type="NCBI Taxonomy" id="4081"/>
    <lineage>
        <taxon>Eukaryota</taxon>
        <taxon>Viridiplantae</taxon>
        <taxon>Streptophyta</taxon>
        <taxon>Embryophyta</taxon>
        <taxon>Tracheophyta</taxon>
        <taxon>Spermatophyta</taxon>
        <taxon>Magnoliopsida</taxon>
        <taxon>eudicotyledons</taxon>
        <taxon>Gunneridae</taxon>
        <taxon>Pentapetalae</taxon>
        <taxon>asterids</taxon>
        <taxon>lamiids</taxon>
        <taxon>Solanales</taxon>
        <taxon>Solanaceae</taxon>
        <taxon>Solanoideae</taxon>
        <taxon>Solaneae</taxon>
        <taxon>Solanum</taxon>
        <taxon>Solanum subgen. Lycopersicon</taxon>
    </lineage>
</organism>
<sequence>MDPYKYRPSSAFNSPFCTTNSGAPVFNNNSSLTVGARGPVLLEDYHLVEKLANFDRERIAERVVHARGASAKGFFEVTHDIAHLTCADFLRAPGVQTPVIVRFSTVIHERGSPETLRDPRGFAVKFYTREGNFDLVGNNFPVFFIRDGMKFPDMVHALKPNPKSHIQENWRVLDFFSHHPESLHMFTFLFDDIGIPQDYRHMDGSGVHTFTLINRAGKSTYVKFHWKPTCGVKSLLEEKAIRVGGANHSHATQDLYDSIAAGNYPEWKPSIQIMGPEHEDKFDFDPLDVTKTWPEDILPLQPVGRLVLNKNIDNFLYMNEQLAFCPSIVVPGVYYSDDKMLQTRIFSYSDTQRYRLGPNYLQLPANAPKCAHHNNHYDGSMNFMHRDEEIDYFPSRYDQVRHAEVYPIPSTVCSGKREKCIIQKENNFKQPGERYRSFTPDRQERFIRRWVEALSDPRITYEIRSIWITYWSQADKSLGQKLASRLNVRPSI</sequence>
<proteinExistence type="evidence at transcript level"/>
<keyword id="KW-0349">Heme</keyword>
<keyword id="KW-0376">Hydrogen peroxide</keyword>
<keyword id="KW-0408">Iron</keyword>
<keyword id="KW-0479">Metal-binding</keyword>
<keyword id="KW-0560">Oxidoreductase</keyword>
<keyword id="KW-0575">Peroxidase</keyword>
<keyword id="KW-0576">Peroxisome</keyword>
<keyword id="KW-1185">Reference proteome</keyword>